<sequence length="23" mass="2443">MDKLAAGGLYLLFLLLAGIIVTH</sequence>
<gene>
    <name type="primary">50</name>
</gene>
<name>GP50_BPSP1</name>
<accession>O48404</accession>
<proteinExistence type="predicted"/>
<protein>
    <recommendedName>
        <fullName>Putative gene 50 protein</fullName>
    </recommendedName>
</protein>
<reference key="1">
    <citation type="journal article" date="1998" name="Virology">
        <title>Genes and regulatory sites of the 'host-takeover module' in the terminal redundancy of Bacillus subtilis bacteriophage SPO1.</title>
        <authorList>
            <person name="Stewart C.R."/>
            <person name="Gaslightwala I."/>
            <person name="Hinata K."/>
            <person name="Krolikowski K.A."/>
            <person name="Needleman D.S."/>
            <person name="Peng A.S.-Y."/>
            <person name="Peterman M.A."/>
            <person name="Tobias A."/>
            <person name="Wei P."/>
        </authorList>
    </citation>
    <scope>NUCLEOTIDE SEQUENCE [GENOMIC DNA]</scope>
</reference>
<organismHost>
    <name type="scientific">Bacillus subtilis</name>
    <dbReference type="NCBI Taxonomy" id="1423"/>
</organismHost>
<feature type="chain" id="PRO_0000106156" description="Putative gene 50 protein">
    <location>
        <begin position="1"/>
        <end position="23"/>
    </location>
</feature>
<dbReference type="EMBL" id="AF031901">
    <property type="protein sequence ID" value="AAC29019.1"/>
    <property type="molecule type" value="Genomic_DNA"/>
</dbReference>
<dbReference type="RefSeq" id="YP_002300294.1">
    <property type="nucleotide sequence ID" value="NC_011421.1"/>
</dbReference>
<dbReference type="GeneID" id="7009007"/>
<dbReference type="KEGG" id="vg:7009007"/>
<organism>
    <name type="scientific">Bacillus phage SP01</name>
    <name type="common">Bacteriophage SP01</name>
    <dbReference type="NCBI Taxonomy" id="2884427"/>
    <lineage>
        <taxon>Viruses</taxon>
        <taxon>Duplodnaviria</taxon>
        <taxon>Heunggongvirae</taxon>
        <taxon>Uroviricota</taxon>
        <taxon>Caudoviricetes</taxon>
        <taxon>Herelleviridae</taxon>
        <taxon>Spounavirinae</taxon>
        <taxon>Okubovirus</taxon>
        <taxon>Okubovirus SPO1</taxon>
    </lineage>
</organism>